<comment type="function">
    <text evidence="1">Binds to the 23S rRNA.</text>
</comment>
<comment type="subunit">
    <text evidence="1">Part of the 50S ribosomal subunit.</text>
</comment>
<comment type="similarity">
    <text evidence="1">Belongs to the universal ribosomal protein uL15 family.</text>
</comment>
<evidence type="ECO:0000255" key="1">
    <source>
        <dbReference type="HAMAP-Rule" id="MF_01341"/>
    </source>
</evidence>
<evidence type="ECO:0000256" key="2">
    <source>
        <dbReference type="SAM" id="MobiDB-lite"/>
    </source>
</evidence>
<evidence type="ECO:0000305" key="3"/>
<organism>
    <name type="scientific">Shewanella denitrificans (strain OS217 / ATCC BAA-1090 / DSM 15013)</name>
    <dbReference type="NCBI Taxonomy" id="318161"/>
    <lineage>
        <taxon>Bacteria</taxon>
        <taxon>Pseudomonadati</taxon>
        <taxon>Pseudomonadota</taxon>
        <taxon>Gammaproteobacteria</taxon>
        <taxon>Alteromonadales</taxon>
        <taxon>Shewanellaceae</taxon>
        <taxon>Shewanella</taxon>
    </lineage>
</organism>
<dbReference type="EMBL" id="CP000302">
    <property type="protein sequence ID" value="ABE53486.1"/>
    <property type="molecule type" value="Genomic_DNA"/>
</dbReference>
<dbReference type="RefSeq" id="WP_011494653.1">
    <property type="nucleotide sequence ID" value="NC_007954.1"/>
</dbReference>
<dbReference type="SMR" id="Q12SU0"/>
<dbReference type="STRING" id="318161.Sden_0189"/>
<dbReference type="KEGG" id="sdn:Sden_0189"/>
<dbReference type="eggNOG" id="COG0200">
    <property type="taxonomic scope" value="Bacteria"/>
</dbReference>
<dbReference type="HOGENOM" id="CLU_055188_4_2_6"/>
<dbReference type="OrthoDB" id="9810293at2"/>
<dbReference type="Proteomes" id="UP000001982">
    <property type="component" value="Chromosome"/>
</dbReference>
<dbReference type="GO" id="GO:0022625">
    <property type="term" value="C:cytosolic large ribosomal subunit"/>
    <property type="evidence" value="ECO:0007669"/>
    <property type="project" value="TreeGrafter"/>
</dbReference>
<dbReference type="GO" id="GO:0019843">
    <property type="term" value="F:rRNA binding"/>
    <property type="evidence" value="ECO:0007669"/>
    <property type="project" value="UniProtKB-UniRule"/>
</dbReference>
<dbReference type="GO" id="GO:0003735">
    <property type="term" value="F:structural constituent of ribosome"/>
    <property type="evidence" value="ECO:0007669"/>
    <property type="project" value="InterPro"/>
</dbReference>
<dbReference type="GO" id="GO:0006412">
    <property type="term" value="P:translation"/>
    <property type="evidence" value="ECO:0007669"/>
    <property type="project" value="UniProtKB-UniRule"/>
</dbReference>
<dbReference type="FunFam" id="3.100.10.10:FF:000003">
    <property type="entry name" value="50S ribosomal protein L15"/>
    <property type="match status" value="1"/>
</dbReference>
<dbReference type="Gene3D" id="3.100.10.10">
    <property type="match status" value="1"/>
</dbReference>
<dbReference type="HAMAP" id="MF_01341">
    <property type="entry name" value="Ribosomal_uL15"/>
    <property type="match status" value="1"/>
</dbReference>
<dbReference type="InterPro" id="IPR030878">
    <property type="entry name" value="Ribosomal_uL15"/>
</dbReference>
<dbReference type="InterPro" id="IPR021131">
    <property type="entry name" value="Ribosomal_uL15/eL18"/>
</dbReference>
<dbReference type="InterPro" id="IPR036227">
    <property type="entry name" value="Ribosomal_uL15/eL18_sf"/>
</dbReference>
<dbReference type="InterPro" id="IPR005749">
    <property type="entry name" value="Ribosomal_uL15_bac-type"/>
</dbReference>
<dbReference type="InterPro" id="IPR001196">
    <property type="entry name" value="Ribosomal_uL15_CS"/>
</dbReference>
<dbReference type="NCBIfam" id="TIGR01071">
    <property type="entry name" value="rplO_bact"/>
    <property type="match status" value="1"/>
</dbReference>
<dbReference type="PANTHER" id="PTHR12934">
    <property type="entry name" value="50S RIBOSOMAL PROTEIN L15"/>
    <property type="match status" value="1"/>
</dbReference>
<dbReference type="PANTHER" id="PTHR12934:SF11">
    <property type="entry name" value="LARGE RIBOSOMAL SUBUNIT PROTEIN UL15M"/>
    <property type="match status" value="1"/>
</dbReference>
<dbReference type="Pfam" id="PF00828">
    <property type="entry name" value="Ribosomal_L27A"/>
    <property type="match status" value="1"/>
</dbReference>
<dbReference type="SUPFAM" id="SSF52080">
    <property type="entry name" value="Ribosomal proteins L15p and L18e"/>
    <property type="match status" value="1"/>
</dbReference>
<dbReference type="PROSITE" id="PS00475">
    <property type="entry name" value="RIBOSOMAL_L15"/>
    <property type="match status" value="1"/>
</dbReference>
<gene>
    <name evidence="1" type="primary">rplO</name>
    <name type="ordered locus">Sden_0189</name>
</gene>
<reference key="1">
    <citation type="submission" date="2006-03" db="EMBL/GenBank/DDBJ databases">
        <title>Complete sequence of Shewanella denitrificans OS217.</title>
        <authorList>
            <consortium name="US DOE Joint Genome Institute"/>
            <person name="Copeland A."/>
            <person name="Lucas S."/>
            <person name="Lapidus A."/>
            <person name="Barry K."/>
            <person name="Detter J.C."/>
            <person name="Glavina del Rio T."/>
            <person name="Hammon N."/>
            <person name="Israni S."/>
            <person name="Dalin E."/>
            <person name="Tice H."/>
            <person name="Pitluck S."/>
            <person name="Brettin T."/>
            <person name="Bruce D."/>
            <person name="Han C."/>
            <person name="Tapia R."/>
            <person name="Gilna P."/>
            <person name="Kiss H."/>
            <person name="Schmutz J."/>
            <person name="Larimer F."/>
            <person name="Land M."/>
            <person name="Hauser L."/>
            <person name="Kyrpides N."/>
            <person name="Lykidis A."/>
            <person name="Richardson P."/>
        </authorList>
    </citation>
    <scope>NUCLEOTIDE SEQUENCE [LARGE SCALE GENOMIC DNA]</scope>
    <source>
        <strain>OS217 / ATCC BAA-1090 / DSM 15013</strain>
    </source>
</reference>
<proteinExistence type="inferred from homology"/>
<keyword id="KW-1185">Reference proteome</keyword>
<keyword id="KW-0687">Ribonucleoprotein</keyword>
<keyword id="KW-0689">Ribosomal protein</keyword>
<keyword id="KW-0694">RNA-binding</keyword>
<keyword id="KW-0699">rRNA-binding</keyword>
<protein>
    <recommendedName>
        <fullName evidence="1">Large ribosomal subunit protein uL15</fullName>
    </recommendedName>
    <alternativeName>
        <fullName evidence="3">50S ribosomal protein L15</fullName>
    </alternativeName>
</protein>
<name>RL15_SHEDO</name>
<accession>Q12SU0</accession>
<feature type="chain" id="PRO_1000054537" description="Large ribosomal subunit protein uL15">
    <location>
        <begin position="1"/>
        <end position="144"/>
    </location>
</feature>
<feature type="region of interest" description="Disordered" evidence="2">
    <location>
        <begin position="1"/>
        <end position="49"/>
    </location>
</feature>
<feature type="compositionally biased region" description="Gly residues" evidence="2">
    <location>
        <begin position="21"/>
        <end position="31"/>
    </location>
</feature>
<sequence>MRLNTLSPAAGSKSAPKRVGRGIGSGLGKTAGRGHKGQKSRSGGGVRVGFEGGQMPLKIRLPKFGFTSRRALVTAEVRLLELAKVNGDVIDLNTLKDANVLTRNIQFAKIVLSGTIERPVTVKGLKVTKGARAAIEAAGGKIEE</sequence>